<feature type="chain" id="PRO_1000045968" description="2-succinylbenzoate--CoA ligase">
    <location>
        <begin position="1"/>
        <end position="492"/>
    </location>
</feature>
<accession>Q2YTP0</accession>
<evidence type="ECO:0000255" key="1">
    <source>
        <dbReference type="HAMAP-Rule" id="MF_00731"/>
    </source>
</evidence>
<sequence length="492" mass="55524">MDFWLYKQAQQNGHHIAITDGQESYTYQNLYCEASLLAKRLKAYQQSRVGLYIDNSIQSIILIHACWLANIEIAMINTRLTPNEMKNQMRSIDVQLIFCTLPLELRGFQIVLLDDIEFAGRDITMNGLLDNTMDIQYDTSNETVVPKDSPSNILNTSFNLDDIASIMFTSGTTGPQKAVPQTFRNHYASAIGCKESLGFDRDTNWLSVLPIYHISGLSVLLRAVIEGFTVRIVDKFNAEQILTMIKNERITHISLVPQTLNWLMQQGLHEPYDLQKILLGGAKLSATMIETALQYNLPIYNSFGMTETCSQFLTATPQMLHARPDTVGMPSANVDVKIKNPNKEGHGELMIKGANVMNGYLYPTDLTGTFENGYFNTGDIAEIDYEGYVMIYDRRKDLIISGGENIYPYQIETVAKQFPGISDAVCVGHPDDTWGQVPKLYFVSESDISKAQLIAYLSQHLAKYKIPKHFEKVDTLPYTSTGKLQRNKLYRG</sequence>
<organism>
    <name type="scientific">Staphylococcus aureus (strain bovine RF122 / ET3-1)</name>
    <dbReference type="NCBI Taxonomy" id="273036"/>
    <lineage>
        <taxon>Bacteria</taxon>
        <taxon>Bacillati</taxon>
        <taxon>Bacillota</taxon>
        <taxon>Bacilli</taxon>
        <taxon>Bacillales</taxon>
        <taxon>Staphylococcaceae</taxon>
        <taxon>Staphylococcus</taxon>
    </lineage>
</organism>
<dbReference type="EC" id="6.2.1.26" evidence="1"/>
<dbReference type="EMBL" id="AJ938182">
    <property type="protein sequence ID" value="CAI81340.1"/>
    <property type="molecule type" value="Genomic_DNA"/>
</dbReference>
<dbReference type="RefSeq" id="WP_000348355.1">
    <property type="nucleotide sequence ID" value="NC_007622.1"/>
</dbReference>
<dbReference type="SMR" id="Q2YTP0"/>
<dbReference type="KEGG" id="sab:SAB1651c"/>
<dbReference type="HOGENOM" id="CLU_000022_59_0_9"/>
<dbReference type="UniPathway" id="UPA00079"/>
<dbReference type="UniPathway" id="UPA01057">
    <property type="reaction ID" value="UER00166"/>
</dbReference>
<dbReference type="GO" id="GO:0005524">
    <property type="term" value="F:ATP binding"/>
    <property type="evidence" value="ECO:0007669"/>
    <property type="project" value="UniProtKB-KW"/>
</dbReference>
<dbReference type="GO" id="GO:0008756">
    <property type="term" value="F:o-succinylbenzoate-CoA ligase activity"/>
    <property type="evidence" value="ECO:0007669"/>
    <property type="project" value="UniProtKB-UniRule"/>
</dbReference>
<dbReference type="GO" id="GO:0009234">
    <property type="term" value="P:menaquinone biosynthetic process"/>
    <property type="evidence" value="ECO:0007669"/>
    <property type="project" value="UniProtKB-UniRule"/>
</dbReference>
<dbReference type="CDD" id="cd05912">
    <property type="entry name" value="OSB_CoA_lg"/>
    <property type="match status" value="1"/>
</dbReference>
<dbReference type="Gene3D" id="3.30.300.30">
    <property type="match status" value="1"/>
</dbReference>
<dbReference type="Gene3D" id="3.40.50.12780">
    <property type="entry name" value="N-terminal domain of ligase-like"/>
    <property type="match status" value="1"/>
</dbReference>
<dbReference type="HAMAP" id="MF_00731">
    <property type="entry name" value="MenE"/>
    <property type="match status" value="1"/>
</dbReference>
<dbReference type="InterPro" id="IPR025110">
    <property type="entry name" value="AMP-bd_C"/>
</dbReference>
<dbReference type="InterPro" id="IPR045851">
    <property type="entry name" value="AMP-bd_C_sf"/>
</dbReference>
<dbReference type="InterPro" id="IPR000873">
    <property type="entry name" value="AMP-dep_synth/lig_dom"/>
</dbReference>
<dbReference type="InterPro" id="IPR042099">
    <property type="entry name" value="ANL_N_sf"/>
</dbReference>
<dbReference type="InterPro" id="IPR050237">
    <property type="entry name" value="ATP-dep_AMP-bd_enzyme"/>
</dbReference>
<dbReference type="InterPro" id="IPR010192">
    <property type="entry name" value="MenE"/>
</dbReference>
<dbReference type="NCBIfam" id="TIGR01923">
    <property type="entry name" value="menE"/>
    <property type="match status" value="1"/>
</dbReference>
<dbReference type="PANTHER" id="PTHR43767">
    <property type="entry name" value="LONG-CHAIN-FATTY-ACID--COA LIGASE"/>
    <property type="match status" value="1"/>
</dbReference>
<dbReference type="PANTHER" id="PTHR43767:SF1">
    <property type="entry name" value="NONRIBOSOMAL PEPTIDE SYNTHASE PES1 (EUROFUNG)-RELATED"/>
    <property type="match status" value="1"/>
</dbReference>
<dbReference type="Pfam" id="PF00501">
    <property type="entry name" value="AMP-binding"/>
    <property type="match status" value="1"/>
</dbReference>
<dbReference type="Pfam" id="PF13193">
    <property type="entry name" value="AMP-binding_C"/>
    <property type="match status" value="1"/>
</dbReference>
<dbReference type="SUPFAM" id="SSF56801">
    <property type="entry name" value="Acetyl-CoA synthetase-like"/>
    <property type="match status" value="1"/>
</dbReference>
<name>MENE_STAAB</name>
<comment type="function">
    <text evidence="1">Converts 2-succinylbenzoate (OSB) to 2-succinylbenzoyl-CoA (OSB-CoA).</text>
</comment>
<comment type="catalytic activity">
    <reaction evidence="1">
        <text>2-succinylbenzoate + ATP + CoA = 2-succinylbenzoyl-CoA + AMP + diphosphate</text>
        <dbReference type="Rhea" id="RHEA:17009"/>
        <dbReference type="ChEBI" id="CHEBI:18325"/>
        <dbReference type="ChEBI" id="CHEBI:30616"/>
        <dbReference type="ChEBI" id="CHEBI:33019"/>
        <dbReference type="ChEBI" id="CHEBI:57287"/>
        <dbReference type="ChEBI" id="CHEBI:57364"/>
        <dbReference type="ChEBI" id="CHEBI:456215"/>
        <dbReference type="EC" id="6.2.1.26"/>
    </reaction>
</comment>
<comment type="pathway">
    <text evidence="1">Quinol/quinone metabolism; 1,4-dihydroxy-2-naphthoate biosynthesis; 1,4-dihydroxy-2-naphthoate from chorismate: step 5/7.</text>
</comment>
<comment type="pathway">
    <text evidence="1">Quinol/quinone metabolism; menaquinone biosynthesis.</text>
</comment>
<comment type="similarity">
    <text evidence="1">Belongs to the ATP-dependent AMP-binding enzyme family. MenE subfamily.</text>
</comment>
<gene>
    <name evidence="1" type="primary">menE</name>
    <name type="ordered locus">SAB1651c</name>
</gene>
<reference key="1">
    <citation type="journal article" date="2007" name="PLoS ONE">
        <title>Molecular correlates of host specialization in Staphylococcus aureus.</title>
        <authorList>
            <person name="Herron-Olson L."/>
            <person name="Fitzgerald J.R."/>
            <person name="Musser J.M."/>
            <person name="Kapur V."/>
        </authorList>
    </citation>
    <scope>NUCLEOTIDE SEQUENCE [LARGE SCALE GENOMIC DNA]</scope>
    <source>
        <strain>bovine RF122 / ET3-1</strain>
    </source>
</reference>
<keyword id="KW-0067">ATP-binding</keyword>
<keyword id="KW-0436">Ligase</keyword>
<keyword id="KW-0474">Menaquinone biosynthesis</keyword>
<keyword id="KW-0547">Nucleotide-binding</keyword>
<protein>
    <recommendedName>
        <fullName evidence="1">2-succinylbenzoate--CoA ligase</fullName>
        <ecNumber evidence="1">6.2.1.26</ecNumber>
    </recommendedName>
    <alternativeName>
        <fullName evidence="1">o-succinylbenzoyl-CoA synthetase</fullName>
        <shortName evidence="1">OSB-CoA synthetase</shortName>
    </alternativeName>
</protein>
<proteinExistence type="inferred from homology"/>